<sequence length="597" mass="66559">MSASYQTIEHDVPQSYRDKILKWNGWGYSDSQFAINKDGHVTFTGDKYEISGKVMPHFRPWFENYLGIDLGFVSPAQKLSDVIIDAPVENEDIIEFLQENKISFSNEARIRLMRGHGHTVHDMINLREGKIPRLPDIVVWPKSEHEIVKIIEGAMSHNCAIIPIGGGTSVTNALDTPETEKRAVISMDMALLDKILWIDRENLTCRAQAGIVGQSLERQLNKKGFTCGHEPDSIEFSTLGGWVSTRASGMKKNKYGNIEDLVVHLNFVCPKGIIQKQCQVPRMSSGPDIHQIILGSEGTLGVVSEVTIKIFPIPEVKRFGSFVFPNFESGVNFFREVAIQRCQPASLRLMDNDQFVMGQALKVASDSWWADLKSSVSKMYITSWKGFKVDEICAATCVYEGNREEVDQHEERLNKLAEQFHGVVGGAENGQYGYRLTFAIAYLRDLGMNHGVLGESFETSVPWDKVLSLCRNVKELMKREAKAQGVTHPVLANCRVTQVYDAGACVYFYFGFNARGLKNGLEVYDRIETAARDEIIACGGSISHHHGVGKIRKQWMLTTNGAVGIALLKAIKSELDPANIFASANLIDIIGSPHCKL</sequence>
<organism>
    <name type="scientific">Caenorhabditis elegans</name>
    <dbReference type="NCBI Taxonomy" id="6239"/>
    <lineage>
        <taxon>Eukaryota</taxon>
        <taxon>Metazoa</taxon>
        <taxon>Ecdysozoa</taxon>
        <taxon>Nematoda</taxon>
        <taxon>Chromadorea</taxon>
        <taxon>Rhabditida</taxon>
        <taxon>Rhabditina</taxon>
        <taxon>Rhabditomorpha</taxon>
        <taxon>Rhabditoidea</taxon>
        <taxon>Rhabditidae</taxon>
        <taxon>Peloderinae</taxon>
        <taxon>Caenorhabditis</taxon>
    </lineage>
</organism>
<evidence type="ECO:0000250" key="1"/>
<evidence type="ECO:0000255" key="2"/>
<evidence type="ECO:0000255" key="3">
    <source>
        <dbReference type="PROSITE-ProRule" id="PRU00718"/>
    </source>
</evidence>
<evidence type="ECO:0000305" key="4"/>
<protein>
    <recommendedName>
        <fullName>Alkyldihydroxyacetonephosphate synthase</fullName>
        <shortName>Alkyl-DHAP synthase</shortName>
        <ecNumber>2.5.1.26</ecNumber>
    </recommendedName>
    <alternativeName>
        <fullName>Alkylglycerone-phosphate synthase</fullName>
    </alternativeName>
</protein>
<keyword id="KW-0274">FAD</keyword>
<keyword id="KW-0285">Flavoprotein</keyword>
<keyword id="KW-0444">Lipid biosynthesis</keyword>
<keyword id="KW-0443">Lipid metabolism</keyword>
<keyword id="KW-0576">Peroxisome</keyword>
<keyword id="KW-1185">Reference proteome</keyword>
<keyword id="KW-0808">Transferase</keyword>
<dbReference type="EC" id="2.5.1.26"/>
<dbReference type="EMBL" id="AJ002686">
    <property type="protein sequence ID" value="CAA05690.1"/>
    <property type="molecule type" value="mRNA"/>
</dbReference>
<dbReference type="EMBL" id="FO081772">
    <property type="protein sequence ID" value="CCD73794.1"/>
    <property type="molecule type" value="Genomic_DNA"/>
</dbReference>
<dbReference type="PIR" id="JC5829">
    <property type="entry name" value="JC5829"/>
</dbReference>
<dbReference type="RefSeq" id="NP_497185.1">
    <property type="nucleotide sequence ID" value="NM_064784.11"/>
</dbReference>
<dbReference type="SMR" id="O45218"/>
<dbReference type="BioGRID" id="40467">
    <property type="interactions" value="3"/>
</dbReference>
<dbReference type="FunCoup" id="O45218">
    <property type="interactions" value="2571"/>
</dbReference>
<dbReference type="STRING" id="6239.Y50D7A.7.1"/>
<dbReference type="PaxDb" id="6239-Y50D7A.7"/>
<dbReference type="PeptideAtlas" id="O45218"/>
<dbReference type="EnsemblMetazoa" id="Y50D7A.7.1">
    <property type="protein sequence ID" value="Y50D7A.7.1"/>
    <property type="gene ID" value="WBGene00000081"/>
</dbReference>
<dbReference type="GeneID" id="175192"/>
<dbReference type="KEGG" id="cel:CELE_Y50D7A.7"/>
<dbReference type="UCSC" id="Y50D7A.7.1">
    <property type="organism name" value="c. elegans"/>
</dbReference>
<dbReference type="AGR" id="WB:WBGene00000081"/>
<dbReference type="CTD" id="175192"/>
<dbReference type="WormBase" id="Y50D7A.7">
    <property type="protein sequence ID" value="CE26144"/>
    <property type="gene ID" value="WBGene00000081"/>
    <property type="gene designation" value="ads-1"/>
</dbReference>
<dbReference type="eggNOG" id="KOG1233">
    <property type="taxonomic scope" value="Eukaryota"/>
</dbReference>
<dbReference type="GeneTree" id="ENSGT00940000156112"/>
<dbReference type="HOGENOM" id="CLU_017779_2_2_1"/>
<dbReference type="InParanoid" id="O45218"/>
<dbReference type="OMA" id="GTISHQH"/>
<dbReference type="OrthoDB" id="7786253at2759"/>
<dbReference type="PhylomeDB" id="O45218"/>
<dbReference type="Reactome" id="R-CEL-75896">
    <property type="pathway name" value="Plasmalogen biosynthesis"/>
</dbReference>
<dbReference type="UniPathway" id="UPA00781"/>
<dbReference type="PRO" id="PR:O45218"/>
<dbReference type="Proteomes" id="UP000001940">
    <property type="component" value="Chromosome III"/>
</dbReference>
<dbReference type="Bgee" id="WBGene00000081">
    <property type="expression patterns" value="Expressed in larva and 3 other cell types or tissues"/>
</dbReference>
<dbReference type="GO" id="GO:0005777">
    <property type="term" value="C:peroxisome"/>
    <property type="evidence" value="ECO:0000318"/>
    <property type="project" value="GO_Central"/>
</dbReference>
<dbReference type="GO" id="GO:0008609">
    <property type="term" value="F:alkylglycerone-phosphate synthase activity"/>
    <property type="evidence" value="ECO:0000250"/>
    <property type="project" value="UniProtKB"/>
</dbReference>
<dbReference type="GO" id="GO:0071949">
    <property type="term" value="F:FAD binding"/>
    <property type="evidence" value="ECO:0000250"/>
    <property type="project" value="UniProtKB"/>
</dbReference>
<dbReference type="GO" id="GO:0008611">
    <property type="term" value="P:ether lipid biosynthetic process"/>
    <property type="evidence" value="ECO:0000250"/>
    <property type="project" value="UniProtKB"/>
</dbReference>
<dbReference type="GO" id="GO:0008610">
    <property type="term" value="P:lipid biosynthetic process"/>
    <property type="evidence" value="ECO:0000318"/>
    <property type="project" value="GO_Central"/>
</dbReference>
<dbReference type="FunFam" id="3.30.43.10:FF:000003">
    <property type="entry name" value="Alkylglycerone-phosphate synthase"/>
    <property type="match status" value="1"/>
</dbReference>
<dbReference type="Gene3D" id="3.30.160.650">
    <property type="match status" value="1"/>
</dbReference>
<dbReference type="Gene3D" id="3.30.300.330">
    <property type="match status" value="1"/>
</dbReference>
<dbReference type="Gene3D" id="3.30.465.10">
    <property type="match status" value="1"/>
</dbReference>
<dbReference type="Gene3D" id="3.30.70.3450">
    <property type="match status" value="1"/>
</dbReference>
<dbReference type="Gene3D" id="3.30.43.10">
    <property type="entry name" value="Uridine Diphospho-n-acetylenolpyruvylglucosamine Reductase, domain 2"/>
    <property type="match status" value="1"/>
</dbReference>
<dbReference type="Gene3D" id="1.10.45.10">
    <property type="entry name" value="Vanillyl-alcohol Oxidase, Chain A, domain 4"/>
    <property type="match status" value="1"/>
</dbReference>
<dbReference type="InterPro" id="IPR025650">
    <property type="entry name" value="Alkyl-DHAP_Synthase"/>
</dbReference>
<dbReference type="InterPro" id="IPR004113">
    <property type="entry name" value="FAD-bd_oxidored_4_C"/>
</dbReference>
<dbReference type="InterPro" id="IPR016166">
    <property type="entry name" value="FAD-bd_PCMH"/>
</dbReference>
<dbReference type="InterPro" id="IPR036318">
    <property type="entry name" value="FAD-bd_PCMH-like_sf"/>
</dbReference>
<dbReference type="InterPro" id="IPR016167">
    <property type="entry name" value="FAD-bd_PCMH_sub1"/>
</dbReference>
<dbReference type="InterPro" id="IPR016169">
    <property type="entry name" value="FAD-bd_PCMH_sub2"/>
</dbReference>
<dbReference type="InterPro" id="IPR016164">
    <property type="entry name" value="FAD-linked_Oxase-like_C"/>
</dbReference>
<dbReference type="InterPro" id="IPR006094">
    <property type="entry name" value="Oxid_FAD_bind_N"/>
</dbReference>
<dbReference type="InterPro" id="IPR016171">
    <property type="entry name" value="Vanillyl_alc_oxidase_C-sub2"/>
</dbReference>
<dbReference type="PANTHER" id="PTHR46568">
    <property type="entry name" value="ALKYLDIHYDROXYACETONEPHOSPHATE SYNTHASE, PEROXISOMAL"/>
    <property type="match status" value="1"/>
</dbReference>
<dbReference type="PANTHER" id="PTHR46568:SF1">
    <property type="entry name" value="ALKYLDIHYDROXYACETONEPHOSPHATE SYNTHASE, PEROXISOMAL"/>
    <property type="match status" value="1"/>
</dbReference>
<dbReference type="Pfam" id="PF02913">
    <property type="entry name" value="FAD-oxidase_C"/>
    <property type="match status" value="1"/>
</dbReference>
<dbReference type="Pfam" id="PF01565">
    <property type="entry name" value="FAD_binding_4"/>
    <property type="match status" value="1"/>
</dbReference>
<dbReference type="SUPFAM" id="SSF56176">
    <property type="entry name" value="FAD-binding/transporter-associated domain-like"/>
    <property type="match status" value="1"/>
</dbReference>
<dbReference type="SUPFAM" id="SSF55103">
    <property type="entry name" value="FAD-linked oxidases, C-terminal domain"/>
    <property type="match status" value="1"/>
</dbReference>
<dbReference type="PROSITE" id="PS51387">
    <property type="entry name" value="FAD_PCMH"/>
    <property type="match status" value="1"/>
</dbReference>
<name>ADAS_CAEEL</name>
<proteinExistence type="evidence at transcript level"/>
<feature type="chain" id="PRO_0000128177" description="Alkyldihydroxyacetonephosphate synthase">
    <location>
        <begin position="1"/>
        <end position="597"/>
    </location>
</feature>
<feature type="domain" description="FAD-binding PCMH-type" evidence="3">
    <location>
        <begin position="131"/>
        <end position="313"/>
    </location>
</feature>
<feature type="region of interest" description="Important for enzyme activity" evidence="1">
    <location>
        <begin position="544"/>
        <end position="546"/>
    </location>
</feature>
<feature type="short sequence motif" description="Microbody targeting signal" evidence="2">
    <location>
        <begin position="595"/>
        <end position="597"/>
    </location>
</feature>
<feature type="active site" description="Proton donor/acceptor" evidence="1">
    <location>
        <position position="507"/>
    </location>
</feature>
<feature type="binding site" evidence="1">
    <location>
        <begin position="163"/>
        <end position="169"/>
    </location>
    <ligand>
        <name>FAD</name>
        <dbReference type="ChEBI" id="CHEBI:57692"/>
    </ligand>
</feature>
<feature type="binding site" evidence="1">
    <location>
        <begin position="232"/>
        <end position="238"/>
    </location>
    <ligand>
        <name>FAD</name>
        <dbReference type="ChEBI" id="CHEBI:57692"/>
    </ligand>
</feature>
<feature type="binding site" evidence="1">
    <location>
        <begin position="245"/>
        <end position="248"/>
    </location>
    <ligand>
        <name>FAD</name>
        <dbReference type="ChEBI" id="CHEBI:57692"/>
    </ligand>
</feature>
<feature type="binding site" evidence="1">
    <location>
        <begin position="297"/>
        <end position="303"/>
    </location>
    <ligand>
        <name>FAD</name>
        <dbReference type="ChEBI" id="CHEBI:57692"/>
    </ligand>
</feature>
<feature type="binding site" evidence="1">
    <location>
        <position position="444"/>
    </location>
    <ligand>
        <name>substrate</name>
    </ligand>
</feature>
<feature type="site" description="Important for enzyme activity" evidence="1">
    <location>
        <position position="348"/>
    </location>
</feature>
<accession>O45218</accession>
<gene>
    <name type="primary">ads-1</name>
    <name type="ORF">Y50D7A.7</name>
</gene>
<comment type="function">
    <text evidence="1">Catalyzes the exchange of an acyl for a long-chain alkyl group and the formation of the ether bond in the biosynthesis of ether phospholipids.</text>
</comment>
<comment type="catalytic activity">
    <reaction>
        <text>a long chain fatty alcohol + a 1-acylglycerone 3-phosphate = a 1-O-alkylglycerone 3-phosphate + a long-chain fatty acid + H(+)</text>
        <dbReference type="Rhea" id="RHEA:36171"/>
        <dbReference type="ChEBI" id="CHEBI:15378"/>
        <dbReference type="ChEBI" id="CHEBI:17135"/>
        <dbReference type="ChEBI" id="CHEBI:57534"/>
        <dbReference type="ChEBI" id="CHEBI:57560"/>
        <dbReference type="ChEBI" id="CHEBI:73315"/>
        <dbReference type="EC" id="2.5.1.26"/>
    </reaction>
</comment>
<comment type="cofactor">
    <cofactor evidence="1">
        <name>FAD</name>
        <dbReference type="ChEBI" id="CHEBI:57692"/>
    </cofactor>
</comment>
<comment type="pathway">
    <text>Glycerolipid metabolism; ether lipid biosynthesis.</text>
</comment>
<comment type="subunit">
    <text evidence="1">Homodimer.</text>
</comment>
<comment type="subcellular location">
    <subcellularLocation>
        <location>Peroxisome</location>
    </subcellularLocation>
</comment>
<comment type="similarity">
    <text evidence="4">Belongs to the FAD-binding oxidoreductase/transferase type 4 family.</text>
</comment>
<reference key="1">
    <citation type="journal article" date="1998" name="Biochem. Biophys. Res. Commun.">
        <title>Nucleotide sequence of a cDNA clone encoding a Caenorhabditis elegans homolog of mammalian alkyl-dihydroxyacetonephosphate synthase: evolutionary switching of peroxisomal targeting signals.</title>
        <authorList>
            <person name="de Vet E.C.J.M."/>
            <person name="Prinsen H.C.M.T."/>
            <person name="van den Bosch H."/>
        </authorList>
    </citation>
    <scope>NUCLEOTIDE SEQUENCE [MRNA]</scope>
</reference>
<reference key="2">
    <citation type="journal article" date="1998" name="Science">
        <title>Genome sequence of the nematode C. elegans: a platform for investigating biology.</title>
        <authorList>
            <consortium name="The C. elegans sequencing consortium"/>
        </authorList>
    </citation>
    <scope>NUCLEOTIDE SEQUENCE [LARGE SCALE GENOMIC DNA]</scope>
    <source>
        <strain>Bristol N2</strain>
    </source>
</reference>